<protein>
    <recommendedName>
        <fullName evidence="1">Malate dehydrogenase</fullName>
        <ecNumber evidence="1">1.1.1.37</ecNumber>
    </recommendedName>
</protein>
<keyword id="KW-0520">NAD</keyword>
<keyword id="KW-0560">Oxidoreductase</keyword>
<keyword id="KW-1185">Reference proteome</keyword>
<keyword id="KW-0816">Tricarboxylic acid cycle</keyword>
<feature type="chain" id="PRO_1000026480" description="Malate dehydrogenase">
    <location>
        <begin position="1"/>
        <end position="318"/>
    </location>
</feature>
<feature type="active site" description="Proton acceptor" evidence="1">
    <location>
        <position position="179"/>
    </location>
</feature>
<feature type="binding site" evidence="1">
    <location>
        <begin position="11"/>
        <end position="17"/>
    </location>
    <ligand>
        <name>NAD(+)</name>
        <dbReference type="ChEBI" id="CHEBI:57540"/>
    </ligand>
</feature>
<feature type="binding site" evidence="1">
    <location>
        <position position="37"/>
    </location>
    <ligand>
        <name>NAD(+)</name>
        <dbReference type="ChEBI" id="CHEBI:57540"/>
    </ligand>
</feature>
<feature type="binding site" evidence="1">
    <location>
        <position position="86"/>
    </location>
    <ligand>
        <name>substrate</name>
    </ligand>
</feature>
<feature type="binding site" evidence="1">
    <location>
        <position position="92"/>
    </location>
    <ligand>
        <name>substrate</name>
    </ligand>
</feature>
<feature type="binding site" evidence="1">
    <location>
        <position position="99"/>
    </location>
    <ligand>
        <name>NAD(+)</name>
        <dbReference type="ChEBI" id="CHEBI:57540"/>
    </ligand>
</feature>
<feature type="binding site" evidence="1">
    <location>
        <begin position="122"/>
        <end position="124"/>
    </location>
    <ligand>
        <name>NAD(+)</name>
        <dbReference type="ChEBI" id="CHEBI:57540"/>
    </ligand>
</feature>
<feature type="binding site" evidence="1">
    <location>
        <position position="124"/>
    </location>
    <ligand>
        <name>substrate</name>
    </ligand>
</feature>
<feature type="binding site" evidence="1">
    <location>
        <position position="155"/>
    </location>
    <ligand>
        <name>substrate</name>
    </ligand>
</feature>
<name>MDH_NITSB</name>
<gene>
    <name evidence="1" type="primary">mdh</name>
    <name type="ordered locus">NIS_0835</name>
</gene>
<evidence type="ECO:0000255" key="1">
    <source>
        <dbReference type="HAMAP-Rule" id="MF_00487"/>
    </source>
</evidence>
<reference key="1">
    <citation type="journal article" date="2007" name="Proc. Natl. Acad. Sci. U.S.A.">
        <title>Deep-sea vent epsilon-proteobacterial genomes provide insights into emergence of pathogens.</title>
        <authorList>
            <person name="Nakagawa S."/>
            <person name="Takaki Y."/>
            <person name="Shimamura S."/>
            <person name="Reysenbach A.-L."/>
            <person name="Takai K."/>
            <person name="Horikoshi K."/>
        </authorList>
    </citation>
    <scope>NUCLEOTIDE SEQUENCE [LARGE SCALE GENOMIC DNA]</scope>
    <source>
        <strain>SB155-2</strain>
    </source>
</reference>
<dbReference type="EC" id="1.1.1.37" evidence="1"/>
<dbReference type="EMBL" id="AP009178">
    <property type="protein sequence ID" value="BAF69947.1"/>
    <property type="molecule type" value="Genomic_DNA"/>
</dbReference>
<dbReference type="RefSeq" id="WP_012082210.1">
    <property type="nucleotide sequence ID" value="NC_009662.1"/>
</dbReference>
<dbReference type="SMR" id="A6Q388"/>
<dbReference type="FunCoup" id="A6Q388">
    <property type="interactions" value="413"/>
</dbReference>
<dbReference type="STRING" id="387092.NIS_0835"/>
<dbReference type="KEGG" id="nis:NIS_0835"/>
<dbReference type="eggNOG" id="COG0039">
    <property type="taxonomic scope" value="Bacteria"/>
</dbReference>
<dbReference type="HOGENOM" id="CLU_045401_2_1_7"/>
<dbReference type="InParanoid" id="A6Q388"/>
<dbReference type="OrthoDB" id="9802969at2"/>
<dbReference type="Proteomes" id="UP000001118">
    <property type="component" value="Chromosome"/>
</dbReference>
<dbReference type="GO" id="GO:0004459">
    <property type="term" value="F:L-lactate dehydrogenase activity"/>
    <property type="evidence" value="ECO:0007669"/>
    <property type="project" value="TreeGrafter"/>
</dbReference>
<dbReference type="GO" id="GO:0030060">
    <property type="term" value="F:L-malate dehydrogenase (NAD+) activity"/>
    <property type="evidence" value="ECO:0007669"/>
    <property type="project" value="UniProtKB-UniRule"/>
</dbReference>
<dbReference type="GO" id="GO:0006089">
    <property type="term" value="P:lactate metabolic process"/>
    <property type="evidence" value="ECO:0007669"/>
    <property type="project" value="TreeGrafter"/>
</dbReference>
<dbReference type="GO" id="GO:0006099">
    <property type="term" value="P:tricarboxylic acid cycle"/>
    <property type="evidence" value="ECO:0007669"/>
    <property type="project" value="UniProtKB-UniRule"/>
</dbReference>
<dbReference type="CDD" id="cd01339">
    <property type="entry name" value="LDH-like_MDH"/>
    <property type="match status" value="1"/>
</dbReference>
<dbReference type="FunFam" id="3.40.50.720:FF:000018">
    <property type="entry name" value="Malate dehydrogenase"/>
    <property type="match status" value="1"/>
</dbReference>
<dbReference type="FunFam" id="3.90.110.10:FF:000004">
    <property type="entry name" value="Malate dehydrogenase"/>
    <property type="match status" value="1"/>
</dbReference>
<dbReference type="Gene3D" id="3.90.110.10">
    <property type="entry name" value="Lactate dehydrogenase/glycoside hydrolase, family 4, C-terminal"/>
    <property type="match status" value="1"/>
</dbReference>
<dbReference type="Gene3D" id="3.40.50.720">
    <property type="entry name" value="NAD(P)-binding Rossmann-like Domain"/>
    <property type="match status" value="1"/>
</dbReference>
<dbReference type="HAMAP" id="MF_00487">
    <property type="entry name" value="Malate_dehydrog_3"/>
    <property type="match status" value="1"/>
</dbReference>
<dbReference type="InterPro" id="IPR001557">
    <property type="entry name" value="L-lactate/malate_DH"/>
</dbReference>
<dbReference type="InterPro" id="IPR022383">
    <property type="entry name" value="Lactate/malate_DH_C"/>
</dbReference>
<dbReference type="InterPro" id="IPR001236">
    <property type="entry name" value="Lactate/malate_DH_N"/>
</dbReference>
<dbReference type="InterPro" id="IPR015955">
    <property type="entry name" value="Lactate_DH/Glyco_Ohase_4_C"/>
</dbReference>
<dbReference type="InterPro" id="IPR011275">
    <property type="entry name" value="Malate_DH_type3"/>
</dbReference>
<dbReference type="InterPro" id="IPR036291">
    <property type="entry name" value="NAD(P)-bd_dom_sf"/>
</dbReference>
<dbReference type="NCBIfam" id="TIGR01763">
    <property type="entry name" value="MalateDH_bact"/>
    <property type="match status" value="1"/>
</dbReference>
<dbReference type="NCBIfam" id="NF004863">
    <property type="entry name" value="PRK06223.1"/>
    <property type="match status" value="1"/>
</dbReference>
<dbReference type="PANTHER" id="PTHR43128">
    <property type="entry name" value="L-2-HYDROXYCARBOXYLATE DEHYDROGENASE (NAD(P)(+))"/>
    <property type="match status" value="1"/>
</dbReference>
<dbReference type="PANTHER" id="PTHR43128:SF16">
    <property type="entry name" value="L-LACTATE DEHYDROGENASE"/>
    <property type="match status" value="1"/>
</dbReference>
<dbReference type="Pfam" id="PF02866">
    <property type="entry name" value="Ldh_1_C"/>
    <property type="match status" value="1"/>
</dbReference>
<dbReference type="Pfam" id="PF00056">
    <property type="entry name" value="Ldh_1_N"/>
    <property type="match status" value="1"/>
</dbReference>
<dbReference type="PIRSF" id="PIRSF000102">
    <property type="entry name" value="Lac_mal_DH"/>
    <property type="match status" value="1"/>
</dbReference>
<dbReference type="PRINTS" id="PR00086">
    <property type="entry name" value="LLDHDRGNASE"/>
</dbReference>
<dbReference type="SUPFAM" id="SSF56327">
    <property type="entry name" value="LDH C-terminal domain-like"/>
    <property type="match status" value="1"/>
</dbReference>
<dbReference type="SUPFAM" id="SSF51735">
    <property type="entry name" value="NAD(P)-binding Rossmann-fold domains"/>
    <property type="match status" value="1"/>
</dbReference>
<sequence>MAKSSKVSIVGAGGNVGSIVAYSVAMQGLAHEVILVDRDKDRAQGKALDMNQAAAAMRTHSIVRAANDYTDIEGSKVVVITAGFPRKPGMSRDDLLFANADIVSEVVENVVKHAPDSIIIVVTNPLDTMTYVALKKSGFPKNRVIGMAGILDGARMTHFIYEKLGFGAGQIRATVIGGHGDYMVPLPRYSTVAGIPITDLLTPQELQEVVEATKNGGAQIVKLMGTSAYFAPGKATAIMVEAILQDSKKIYPCSTLLEGEYGVHGIPNGVPVTLGANGVEEIIELQLTPREREEFQRSVDSVKELIDVLENQNYFGEK</sequence>
<proteinExistence type="inferred from homology"/>
<comment type="function">
    <text evidence="1">Catalyzes the reversible oxidation of malate to oxaloacetate.</text>
</comment>
<comment type="catalytic activity">
    <reaction evidence="1">
        <text>(S)-malate + NAD(+) = oxaloacetate + NADH + H(+)</text>
        <dbReference type="Rhea" id="RHEA:21432"/>
        <dbReference type="ChEBI" id="CHEBI:15378"/>
        <dbReference type="ChEBI" id="CHEBI:15589"/>
        <dbReference type="ChEBI" id="CHEBI:16452"/>
        <dbReference type="ChEBI" id="CHEBI:57540"/>
        <dbReference type="ChEBI" id="CHEBI:57945"/>
        <dbReference type="EC" id="1.1.1.37"/>
    </reaction>
</comment>
<comment type="similarity">
    <text evidence="1">Belongs to the LDH/MDH superfamily. MDH type 3 family.</text>
</comment>
<accession>A6Q388</accession>
<organism>
    <name type="scientific">Nitratiruptor sp. (strain SB155-2)</name>
    <dbReference type="NCBI Taxonomy" id="387092"/>
    <lineage>
        <taxon>Bacteria</taxon>
        <taxon>Pseudomonadati</taxon>
        <taxon>Campylobacterota</taxon>
        <taxon>Epsilonproteobacteria</taxon>
        <taxon>Nautiliales</taxon>
        <taxon>Nitratiruptoraceae</taxon>
        <taxon>Nitratiruptor</taxon>
    </lineage>
</organism>